<evidence type="ECO:0000250" key="1">
    <source>
        <dbReference type="UniProtKB" id="Q9JJV7"/>
    </source>
</evidence>
<evidence type="ECO:0000250" key="2">
    <source>
        <dbReference type="UniProtKB" id="Q9Y6H6"/>
    </source>
</evidence>
<evidence type="ECO:0000255" key="3"/>
<evidence type="ECO:0000256" key="4">
    <source>
        <dbReference type="SAM" id="MobiDB-lite"/>
    </source>
</evidence>
<evidence type="ECO:0000305" key="5"/>
<evidence type="ECO:0000312" key="6">
    <source>
        <dbReference type="MGI" id="MGI:1891124"/>
    </source>
</evidence>
<organism>
    <name type="scientific">Mus musculus</name>
    <name type="common">Mouse</name>
    <dbReference type="NCBI Taxonomy" id="10090"/>
    <lineage>
        <taxon>Eukaryota</taxon>
        <taxon>Metazoa</taxon>
        <taxon>Chordata</taxon>
        <taxon>Craniata</taxon>
        <taxon>Vertebrata</taxon>
        <taxon>Euteleostomi</taxon>
        <taxon>Mammalia</taxon>
        <taxon>Eutheria</taxon>
        <taxon>Euarchontoglires</taxon>
        <taxon>Glires</taxon>
        <taxon>Rodentia</taxon>
        <taxon>Myomorpha</taxon>
        <taxon>Muroidea</taxon>
        <taxon>Muridae</taxon>
        <taxon>Murinae</taxon>
        <taxon>Mus</taxon>
        <taxon>Mus</taxon>
    </lineage>
</organism>
<gene>
    <name evidence="6" type="primary">Kcne3</name>
</gene>
<feature type="chain" id="PRO_0000144290" description="Potassium voltage-gated channel subfamily E member 3">
    <location>
        <begin position="1"/>
        <end position="103"/>
    </location>
</feature>
<feature type="transmembrane region" description="Helical" evidence="2">
    <location>
        <begin position="57"/>
        <end position="77"/>
    </location>
</feature>
<feature type="topological domain" description="Cytoplasmic" evidence="5">
    <location>
        <begin position="78"/>
        <end position="103"/>
    </location>
</feature>
<feature type="region of interest" description="Disordered" evidence="4">
    <location>
        <begin position="30"/>
        <end position="52"/>
    </location>
</feature>
<feature type="region of interest" description="Interaction with KCNQ1" evidence="2">
    <location>
        <begin position="68"/>
        <end position="79"/>
    </location>
</feature>
<feature type="glycosylation site" description="N-linked (GlcNAc...) asparagine" evidence="3">
    <location>
        <position position="5"/>
    </location>
</feature>
<feature type="glycosylation site" description="N-linked (GlcNAc...) asparagine" evidence="3">
    <location>
        <position position="22"/>
    </location>
</feature>
<feature type="glycosylation site" description="N-linked (GlcNAc...) asparagine" evidence="3">
    <location>
        <position position="41"/>
    </location>
</feature>
<reference key="1">
    <citation type="submission" date="1998-07" db="EMBL/GenBank/DDBJ databases">
        <authorList>
            <person name="Abbott G.W."/>
            <person name="Sesti F."/>
            <person name="Buck M.E."/>
            <person name="Goldstein S.A.N."/>
        </authorList>
    </citation>
    <scope>NUCLEOTIDE SEQUENCE [MRNA]</scope>
</reference>
<reference key="2">
    <citation type="journal article" date="2004" name="Genome Res.">
        <title>The status, quality, and expansion of the NIH full-length cDNA project: the Mammalian Gene Collection (MGC).</title>
        <authorList>
            <consortium name="The MGC Project Team"/>
        </authorList>
    </citation>
    <scope>NUCLEOTIDE SEQUENCE [LARGE SCALE MRNA]</scope>
    <source>
        <strain>FVB/N</strain>
        <tissue>Mammary gland</tissue>
    </source>
</reference>
<protein>
    <recommendedName>
        <fullName>Potassium voltage-gated channel subfamily E member 3</fullName>
    </recommendedName>
    <alternativeName>
        <fullName>MinK-related peptide 2</fullName>
    </alternativeName>
    <alternativeName>
        <fullName>Minimum potassium ion channel-related peptide 2</fullName>
    </alternativeName>
    <alternativeName>
        <fullName>Potassium channel subunit beta MiRP2</fullName>
    </alternativeName>
</protein>
<accession>Q9WTW2</accession>
<name>KCNE3_MOUSE</name>
<keyword id="KW-1003">Cell membrane</keyword>
<keyword id="KW-0966">Cell projection</keyword>
<keyword id="KW-0963">Cytoplasm</keyword>
<keyword id="KW-0325">Glycoprotein</keyword>
<keyword id="KW-0406">Ion transport</keyword>
<keyword id="KW-0472">Membrane</keyword>
<keyword id="KW-0630">Potassium</keyword>
<keyword id="KW-0633">Potassium transport</keyword>
<keyword id="KW-1185">Reference proteome</keyword>
<keyword id="KW-0812">Transmembrane</keyword>
<keyword id="KW-1133">Transmembrane helix</keyword>
<keyword id="KW-0813">Transport</keyword>
<sequence>METSNGTETWYMSLHAVLKALNTTLHSHLLCRPGPGPGPDNQTEDRRASLPGRNDNSYMYILFVMFLFAVTVGSLILGYTRSRKVDKRSDPYHVYIKNRVSMI</sequence>
<dbReference type="EMBL" id="AF076532">
    <property type="protein sequence ID" value="AAD28090.1"/>
    <property type="molecule type" value="mRNA"/>
</dbReference>
<dbReference type="EMBL" id="BC004629">
    <property type="protein sequence ID" value="AAH04629.1"/>
    <property type="molecule type" value="mRNA"/>
</dbReference>
<dbReference type="CCDS" id="CCDS21495.1"/>
<dbReference type="RefSeq" id="NP_001177798.1">
    <property type="nucleotide sequence ID" value="NM_001190869.1"/>
</dbReference>
<dbReference type="RefSeq" id="NP_001177799.1">
    <property type="nucleotide sequence ID" value="NM_001190870.1"/>
</dbReference>
<dbReference type="RefSeq" id="NP_001177800.1">
    <property type="nucleotide sequence ID" value="NM_001190871.2"/>
</dbReference>
<dbReference type="RefSeq" id="NP_001177879.1">
    <property type="nucleotide sequence ID" value="NM_001190950.1"/>
</dbReference>
<dbReference type="RefSeq" id="NP_001347395.1">
    <property type="nucleotide sequence ID" value="NM_001360466.1"/>
</dbReference>
<dbReference type="RefSeq" id="NP_001347396.1">
    <property type="nucleotide sequence ID" value="NM_001360467.1"/>
</dbReference>
<dbReference type="RefSeq" id="NP_065599.1">
    <property type="nucleotide sequence ID" value="NM_020574.5"/>
</dbReference>
<dbReference type="RefSeq" id="XP_006508121.1">
    <property type="nucleotide sequence ID" value="XM_006508058.2"/>
</dbReference>
<dbReference type="RefSeq" id="XP_006508122.1">
    <property type="nucleotide sequence ID" value="XM_006508059.3"/>
</dbReference>
<dbReference type="RefSeq" id="XP_006508125.1">
    <property type="nucleotide sequence ID" value="XM_006508062.1"/>
</dbReference>
<dbReference type="RefSeq" id="XP_017177877.1">
    <property type="nucleotide sequence ID" value="XM_017322388.1"/>
</dbReference>
<dbReference type="SMR" id="Q9WTW2"/>
<dbReference type="BioGRID" id="208299">
    <property type="interactions" value="1"/>
</dbReference>
<dbReference type="CORUM" id="Q9WTW2"/>
<dbReference type="FunCoup" id="Q9WTW2">
    <property type="interactions" value="136"/>
</dbReference>
<dbReference type="STRING" id="10090.ENSMUSP00000136616"/>
<dbReference type="TCDB" id="8.A.10.3.1">
    <property type="family name" value="the slow voltage-gated k+ channel accessory protein (mink) family"/>
</dbReference>
<dbReference type="GlyCosmos" id="Q9WTW2">
    <property type="glycosylation" value="3 sites, No reported glycans"/>
</dbReference>
<dbReference type="GlyGen" id="Q9WTW2">
    <property type="glycosylation" value="4 sites"/>
</dbReference>
<dbReference type="iPTMnet" id="Q9WTW2"/>
<dbReference type="PhosphoSitePlus" id="Q9WTW2"/>
<dbReference type="PaxDb" id="10090-ENSMUSP00000130019"/>
<dbReference type="ProteomicsDB" id="301772"/>
<dbReference type="Antibodypedia" id="2753">
    <property type="antibodies" value="153 antibodies from 28 providers"/>
</dbReference>
<dbReference type="DNASU" id="57442"/>
<dbReference type="Ensembl" id="ENSMUST00000049333.13">
    <property type="protein sequence ID" value="ENSMUSP00000039353.6"/>
    <property type="gene ID" value="ENSMUSG00000035165.15"/>
</dbReference>
<dbReference type="Ensembl" id="ENSMUST00000170954.10">
    <property type="protein sequence ID" value="ENSMUSP00000130019.3"/>
    <property type="gene ID" value="ENSMUSG00000035165.15"/>
</dbReference>
<dbReference type="Ensembl" id="ENSMUST00000178946.9">
    <property type="protein sequence ID" value="ENSMUSP00000136616.2"/>
    <property type="gene ID" value="ENSMUSG00000035165.15"/>
</dbReference>
<dbReference type="Ensembl" id="ENSMUST00000179842.3">
    <property type="protein sequence ID" value="ENSMUSP00000136415.2"/>
    <property type="gene ID" value="ENSMUSG00000035165.15"/>
</dbReference>
<dbReference type="Ensembl" id="ENSMUST00000207358.2">
    <property type="protein sequence ID" value="ENSMUSP00000146583.2"/>
    <property type="gene ID" value="ENSMUSG00000035165.15"/>
</dbReference>
<dbReference type="Ensembl" id="ENSMUST00000207995.2">
    <property type="protein sequence ID" value="ENSMUSP00000147151.2"/>
    <property type="gene ID" value="ENSMUSG00000035165.15"/>
</dbReference>
<dbReference type="Ensembl" id="ENSMUST00000208260.2">
    <property type="protein sequence ID" value="ENSMUSP00000147047.2"/>
    <property type="gene ID" value="ENSMUSG00000035165.15"/>
</dbReference>
<dbReference type="GeneID" id="57442"/>
<dbReference type="KEGG" id="mmu:57442"/>
<dbReference type="UCSC" id="uc009imm.2">
    <property type="organism name" value="mouse"/>
</dbReference>
<dbReference type="AGR" id="MGI:1891124"/>
<dbReference type="CTD" id="10008"/>
<dbReference type="MGI" id="MGI:1891124">
    <property type="gene designation" value="Kcne3"/>
</dbReference>
<dbReference type="VEuPathDB" id="HostDB:ENSMUSG00000035165"/>
<dbReference type="eggNOG" id="ENOG502S4UF">
    <property type="taxonomic scope" value="Eukaryota"/>
</dbReference>
<dbReference type="GeneTree" id="ENSGT00940000155001"/>
<dbReference type="HOGENOM" id="CLU_180169_0_0_1"/>
<dbReference type="InParanoid" id="Q9WTW2"/>
<dbReference type="OMA" id="ANAYMYI"/>
<dbReference type="OrthoDB" id="9907547at2759"/>
<dbReference type="PhylomeDB" id="Q9WTW2"/>
<dbReference type="TreeFam" id="TF335981"/>
<dbReference type="Reactome" id="R-MMU-5576890">
    <property type="pathway name" value="Phase 3 - rapid repolarisation"/>
</dbReference>
<dbReference type="Reactome" id="R-MMU-5576893">
    <property type="pathway name" value="Phase 2 - plateau phase"/>
</dbReference>
<dbReference type="BioGRID-ORCS" id="57442">
    <property type="hits" value="2 hits in 77 CRISPR screens"/>
</dbReference>
<dbReference type="PRO" id="PR:Q9WTW2"/>
<dbReference type="Proteomes" id="UP000000589">
    <property type="component" value="Chromosome 7"/>
</dbReference>
<dbReference type="RNAct" id="Q9WTW2">
    <property type="molecule type" value="protein"/>
</dbReference>
<dbReference type="Bgee" id="ENSMUSG00000035165">
    <property type="expression patterns" value="Expressed in spermatid and 116 other cell types or tissues"/>
</dbReference>
<dbReference type="ExpressionAtlas" id="Q9WTW2">
    <property type="expression patterns" value="baseline and differential"/>
</dbReference>
<dbReference type="GO" id="GO:1990794">
    <property type="term" value="C:basolateral part of cell"/>
    <property type="evidence" value="ECO:0000314"/>
    <property type="project" value="MGI"/>
</dbReference>
<dbReference type="GO" id="GO:0005737">
    <property type="term" value="C:cytoplasm"/>
    <property type="evidence" value="ECO:0000250"/>
    <property type="project" value="UniProtKB"/>
</dbReference>
<dbReference type="GO" id="GO:0030425">
    <property type="term" value="C:dendrite"/>
    <property type="evidence" value="ECO:0000250"/>
    <property type="project" value="UniProtKB"/>
</dbReference>
<dbReference type="GO" id="GO:0045121">
    <property type="term" value="C:membrane raft"/>
    <property type="evidence" value="ECO:0007669"/>
    <property type="project" value="UniProtKB-SubCell"/>
</dbReference>
<dbReference type="GO" id="GO:0032809">
    <property type="term" value="C:neuronal cell body membrane"/>
    <property type="evidence" value="ECO:0000250"/>
    <property type="project" value="UniProtKB"/>
</dbReference>
<dbReference type="GO" id="GO:0043204">
    <property type="term" value="C:perikaryon"/>
    <property type="evidence" value="ECO:0000250"/>
    <property type="project" value="UniProtKB"/>
</dbReference>
<dbReference type="GO" id="GO:0005886">
    <property type="term" value="C:plasma membrane"/>
    <property type="evidence" value="ECO:0000250"/>
    <property type="project" value="UniProtKB"/>
</dbReference>
<dbReference type="GO" id="GO:0031982">
    <property type="term" value="C:vesicle"/>
    <property type="evidence" value="ECO:0000250"/>
    <property type="project" value="UniProtKB"/>
</dbReference>
<dbReference type="GO" id="GO:0008076">
    <property type="term" value="C:voltage-gated potassium channel complex"/>
    <property type="evidence" value="ECO:0000250"/>
    <property type="project" value="MGI"/>
</dbReference>
<dbReference type="GO" id="GO:0005267">
    <property type="term" value="F:potassium channel activity"/>
    <property type="evidence" value="ECO:0000250"/>
    <property type="project" value="MGI"/>
</dbReference>
<dbReference type="GO" id="GO:0015459">
    <property type="term" value="F:potassium channel regulator activity"/>
    <property type="evidence" value="ECO:0000250"/>
    <property type="project" value="UniProtKB"/>
</dbReference>
<dbReference type="GO" id="GO:0044325">
    <property type="term" value="F:transmembrane transporter binding"/>
    <property type="evidence" value="ECO:0007669"/>
    <property type="project" value="Ensembl"/>
</dbReference>
<dbReference type="GO" id="GO:0005249">
    <property type="term" value="F:voltage-gated potassium channel activity"/>
    <property type="evidence" value="ECO:0007669"/>
    <property type="project" value="InterPro"/>
</dbReference>
<dbReference type="GO" id="GO:0030644">
    <property type="term" value="P:intracellular chloride ion homeostasis"/>
    <property type="evidence" value="ECO:0000314"/>
    <property type="project" value="MGI"/>
</dbReference>
<dbReference type="GO" id="GO:1902260">
    <property type="term" value="P:negative regulation of delayed rectifier potassium channel activity"/>
    <property type="evidence" value="ECO:0000250"/>
    <property type="project" value="UniProtKB"/>
</dbReference>
<dbReference type="GO" id="GO:1905025">
    <property type="term" value="P:negative regulation of membrane repolarization during ventricular cardiac muscle cell action potential"/>
    <property type="evidence" value="ECO:0007669"/>
    <property type="project" value="Ensembl"/>
</dbReference>
<dbReference type="GO" id="GO:1903765">
    <property type="term" value="P:negative regulation of potassium ion export across plasma membrane"/>
    <property type="evidence" value="ECO:0007669"/>
    <property type="project" value="Ensembl"/>
</dbReference>
<dbReference type="GO" id="GO:0071805">
    <property type="term" value="P:potassium ion transmembrane transport"/>
    <property type="evidence" value="ECO:0000314"/>
    <property type="project" value="MGI"/>
</dbReference>
<dbReference type="GO" id="GO:0086091">
    <property type="term" value="P:regulation of heart rate by cardiac conduction"/>
    <property type="evidence" value="ECO:0007669"/>
    <property type="project" value="Ensembl"/>
</dbReference>
<dbReference type="GO" id="GO:0006814">
    <property type="term" value="P:sodium ion transport"/>
    <property type="evidence" value="ECO:0000314"/>
    <property type="project" value="MGI"/>
</dbReference>
<dbReference type="InterPro" id="IPR000369">
    <property type="entry name" value="K_chnl_KCNE"/>
</dbReference>
<dbReference type="InterPro" id="IPR005426">
    <property type="entry name" value="K_chnl_volt-dep_bsu_KCNE3"/>
</dbReference>
<dbReference type="PANTHER" id="PTHR15282">
    <property type="entry name" value="POTASSIUM VOLTAGE-GATED CHANNEL SUBFAMILY E MEMBER 1, 3"/>
    <property type="match status" value="1"/>
</dbReference>
<dbReference type="PANTHER" id="PTHR15282:SF6">
    <property type="entry name" value="POTASSIUM VOLTAGE-GATED CHANNEL SUBFAMILY E MEMBER 3"/>
    <property type="match status" value="1"/>
</dbReference>
<dbReference type="Pfam" id="PF02060">
    <property type="entry name" value="ISK_Channel"/>
    <property type="match status" value="1"/>
</dbReference>
<dbReference type="PRINTS" id="PR01606">
    <property type="entry name" value="KCNE3CHANNEL"/>
</dbReference>
<dbReference type="PRINTS" id="PR00168">
    <property type="entry name" value="KCNECHANNEL"/>
</dbReference>
<comment type="function">
    <text evidence="1 2">Ancillary protein that functions as a regulatory subunit of the voltage-gated potassium (Kv) channel complex composed of pore-forming and potassium-conducting alpha subunits and of regulatory beta subunits. KCNE3 beta subunit modulates the gating kinetics and enhances stability of the channel complex. Alters the gating of the delayed rectifier Kv channel containing KCNB1 alpha subunit. Associates with KCNC4/Kv3.4 alpha subunit to form the subthreshold Kv channel in skeletal muscle and to establish the resting membrane potential (RMP) in muscle cells (By similarity). Association with KCNQ1/KCLQT1 alpha subunit may form the intestinal cAMP-stimulated potassium channel involved in chloride secretion that produces a current with nearly instantaneous activation with a linear current-voltage relationship (By similarity).</text>
</comment>
<comment type="subunit">
    <text evidence="1 2">Interacts with KCNB1. Interacts with KCNC2 (By similarity). Associates with KCNC4/Kv3.4 (By similarity). Interacts with KCNQ1; associates with a KCNQ1:KCNE3 stoichiometry of 4:4; produces a current with nearly instantaneous activation with a linear current-voltage relationship and alters membrane raft localization; affects KCNQ1 structure and gating properties (By similarity).</text>
</comment>
<comment type="subcellular location">
    <subcellularLocation>
        <location evidence="1 2">Cell membrane</location>
        <topology evidence="2">Single-pass type I membrane protein</topology>
    </subcellularLocation>
    <subcellularLocation>
        <location evidence="1 2">Cytoplasm</location>
    </subcellularLocation>
    <subcellularLocation>
        <location evidence="2">Perikaryon</location>
    </subcellularLocation>
    <subcellularLocation>
        <location evidence="2">Cell projection</location>
        <location evidence="2">Dendrite</location>
    </subcellularLocation>
    <subcellularLocation>
        <location evidence="2">Membrane raft</location>
    </subcellularLocation>
    <text evidence="2">Colocalizes with KCNB1 at high-density somatodendritic clusters on the surface of hippocampal neurons.</text>
</comment>
<comment type="similarity">
    <text evidence="5">Belongs to the potassium channel KCNE family.</text>
</comment>
<proteinExistence type="inferred from homology"/>